<feature type="chain" id="PRO_1000000717" description="Endoribonuclease YbeY">
    <location>
        <begin position="1"/>
        <end position="166"/>
    </location>
</feature>
<feature type="binding site" evidence="1">
    <location>
        <position position="132"/>
    </location>
    <ligand>
        <name>Zn(2+)</name>
        <dbReference type="ChEBI" id="CHEBI:29105"/>
        <note>catalytic</note>
    </ligand>
</feature>
<feature type="binding site" evidence="1">
    <location>
        <position position="136"/>
    </location>
    <ligand>
        <name>Zn(2+)</name>
        <dbReference type="ChEBI" id="CHEBI:29105"/>
        <note>catalytic</note>
    </ligand>
</feature>
<feature type="binding site" evidence="1">
    <location>
        <position position="142"/>
    </location>
    <ligand>
        <name>Zn(2+)</name>
        <dbReference type="ChEBI" id="CHEBI:29105"/>
        <note>catalytic</note>
    </ligand>
</feature>
<evidence type="ECO:0000255" key="1">
    <source>
        <dbReference type="HAMAP-Rule" id="MF_00009"/>
    </source>
</evidence>
<proteinExistence type="inferred from homology"/>
<keyword id="KW-0963">Cytoplasm</keyword>
<keyword id="KW-0255">Endonuclease</keyword>
<keyword id="KW-0378">Hydrolase</keyword>
<keyword id="KW-0479">Metal-binding</keyword>
<keyword id="KW-0540">Nuclease</keyword>
<keyword id="KW-0690">Ribosome biogenesis</keyword>
<keyword id="KW-0698">rRNA processing</keyword>
<keyword id="KW-0862">Zinc</keyword>
<name>YBEY_CLOBL</name>
<gene>
    <name evidence="1" type="primary">ybeY</name>
    <name type="ordered locus">CLI_3001</name>
</gene>
<reference key="1">
    <citation type="submission" date="2007-06" db="EMBL/GenBank/DDBJ databases">
        <authorList>
            <person name="Brinkac L.M."/>
            <person name="Daugherty S."/>
            <person name="Dodson R.J."/>
            <person name="Madupu R."/>
            <person name="Brown J.L."/>
            <person name="Bruce D."/>
            <person name="Detter C."/>
            <person name="Munk C."/>
            <person name="Smith L.A."/>
            <person name="Smith T.J."/>
            <person name="White O."/>
            <person name="Brettin T.S."/>
        </authorList>
    </citation>
    <scope>NUCLEOTIDE SEQUENCE [LARGE SCALE GENOMIC DNA]</scope>
    <source>
        <strain>Langeland / NCTC 10281 / Type F</strain>
    </source>
</reference>
<comment type="function">
    <text evidence="1">Single strand-specific metallo-endoribonuclease involved in late-stage 70S ribosome quality control and in maturation of the 3' terminus of the 16S rRNA.</text>
</comment>
<comment type="cofactor">
    <cofactor evidence="1">
        <name>Zn(2+)</name>
        <dbReference type="ChEBI" id="CHEBI:29105"/>
    </cofactor>
    <text evidence="1">Binds 1 zinc ion.</text>
</comment>
<comment type="subcellular location">
    <subcellularLocation>
        <location evidence="1">Cytoplasm</location>
    </subcellularLocation>
</comment>
<comment type="similarity">
    <text evidence="1">Belongs to the endoribonuclease YbeY family.</text>
</comment>
<protein>
    <recommendedName>
        <fullName evidence="1">Endoribonuclease YbeY</fullName>
        <ecNumber evidence="1">3.1.-.-</ecNumber>
    </recommendedName>
</protein>
<dbReference type="EC" id="3.1.-.-" evidence="1"/>
<dbReference type="EMBL" id="CP000728">
    <property type="protein sequence ID" value="ABS40265.1"/>
    <property type="molecule type" value="Genomic_DNA"/>
</dbReference>
<dbReference type="RefSeq" id="WP_004451895.1">
    <property type="nucleotide sequence ID" value="NC_009699.1"/>
</dbReference>
<dbReference type="SMR" id="A7GHG5"/>
<dbReference type="KEGG" id="cbf:CLI_3001"/>
<dbReference type="HOGENOM" id="CLU_106710_3_0_9"/>
<dbReference type="Proteomes" id="UP000002410">
    <property type="component" value="Chromosome"/>
</dbReference>
<dbReference type="GO" id="GO:0005737">
    <property type="term" value="C:cytoplasm"/>
    <property type="evidence" value="ECO:0007669"/>
    <property type="project" value="UniProtKB-SubCell"/>
</dbReference>
<dbReference type="GO" id="GO:0004222">
    <property type="term" value="F:metalloendopeptidase activity"/>
    <property type="evidence" value="ECO:0007669"/>
    <property type="project" value="InterPro"/>
</dbReference>
<dbReference type="GO" id="GO:0004521">
    <property type="term" value="F:RNA endonuclease activity"/>
    <property type="evidence" value="ECO:0007669"/>
    <property type="project" value="UniProtKB-UniRule"/>
</dbReference>
<dbReference type="GO" id="GO:0008270">
    <property type="term" value="F:zinc ion binding"/>
    <property type="evidence" value="ECO:0007669"/>
    <property type="project" value="UniProtKB-UniRule"/>
</dbReference>
<dbReference type="GO" id="GO:0006364">
    <property type="term" value="P:rRNA processing"/>
    <property type="evidence" value="ECO:0007669"/>
    <property type="project" value="UniProtKB-UniRule"/>
</dbReference>
<dbReference type="Gene3D" id="3.40.390.30">
    <property type="entry name" value="Metalloproteases ('zincins'), catalytic domain"/>
    <property type="match status" value="1"/>
</dbReference>
<dbReference type="HAMAP" id="MF_00009">
    <property type="entry name" value="Endoribonucl_YbeY"/>
    <property type="match status" value="1"/>
</dbReference>
<dbReference type="InterPro" id="IPR023091">
    <property type="entry name" value="MetalPrtase_cat_dom_sf_prd"/>
</dbReference>
<dbReference type="InterPro" id="IPR002036">
    <property type="entry name" value="YbeY"/>
</dbReference>
<dbReference type="InterPro" id="IPR020549">
    <property type="entry name" value="YbeY_CS"/>
</dbReference>
<dbReference type="NCBIfam" id="TIGR00043">
    <property type="entry name" value="rRNA maturation RNase YbeY"/>
    <property type="match status" value="1"/>
</dbReference>
<dbReference type="PANTHER" id="PTHR46986">
    <property type="entry name" value="ENDORIBONUCLEASE YBEY, CHLOROPLASTIC"/>
    <property type="match status" value="1"/>
</dbReference>
<dbReference type="PANTHER" id="PTHR46986:SF1">
    <property type="entry name" value="ENDORIBONUCLEASE YBEY, CHLOROPLASTIC"/>
    <property type="match status" value="1"/>
</dbReference>
<dbReference type="Pfam" id="PF02130">
    <property type="entry name" value="YbeY"/>
    <property type="match status" value="1"/>
</dbReference>
<dbReference type="SUPFAM" id="SSF55486">
    <property type="entry name" value="Metalloproteases ('zincins'), catalytic domain"/>
    <property type="match status" value="1"/>
</dbReference>
<dbReference type="PROSITE" id="PS01306">
    <property type="entry name" value="UPF0054"/>
    <property type="match status" value="1"/>
</dbReference>
<accession>A7GHG5</accession>
<organism>
    <name type="scientific">Clostridium botulinum (strain Langeland / NCTC 10281 / Type F)</name>
    <dbReference type="NCBI Taxonomy" id="441772"/>
    <lineage>
        <taxon>Bacteria</taxon>
        <taxon>Bacillati</taxon>
        <taxon>Bacillota</taxon>
        <taxon>Clostridia</taxon>
        <taxon>Eubacteriales</taxon>
        <taxon>Clostridiaceae</taxon>
        <taxon>Clostridium</taxon>
    </lineage>
</organism>
<sequence length="166" mass="19762">MIYIDNRQNKIKVNEELENKIKEIIDYALKEEKVNIDYEISVVFIDNNSIKEINKDYRNIDKATDVLSFPMLDYEEGKVFKDIYLNYEFDESDLDEGNLVLGDIALSLEKAEEQSKEFGHSFLRETCYLTIHSVLHLLGYDHMEEDEKVIMRQREEEILKSFNLHR</sequence>